<evidence type="ECO:0000255" key="1">
    <source>
        <dbReference type="HAMAP-Rule" id="MF_01271"/>
    </source>
</evidence>
<name>NAGK_ECOL6</name>
<dbReference type="EC" id="2.7.1.59" evidence="1"/>
<dbReference type="EMBL" id="AE014075">
    <property type="protein sequence ID" value="AAN79863.1"/>
    <property type="molecule type" value="Genomic_DNA"/>
</dbReference>
<dbReference type="RefSeq" id="WP_000291305.1">
    <property type="nucleotide sequence ID" value="NZ_CP051263.1"/>
</dbReference>
<dbReference type="SMR" id="Q8FIM5"/>
<dbReference type="STRING" id="199310.c1394"/>
<dbReference type="KEGG" id="ecc:c1394"/>
<dbReference type="eggNOG" id="COG1940">
    <property type="taxonomic scope" value="Bacteria"/>
</dbReference>
<dbReference type="HOGENOM" id="CLU_036604_0_3_6"/>
<dbReference type="BioCyc" id="ECOL199310:C1394-MONOMER"/>
<dbReference type="UniPathway" id="UPA00544"/>
<dbReference type="Proteomes" id="UP000001410">
    <property type="component" value="Chromosome"/>
</dbReference>
<dbReference type="GO" id="GO:0005524">
    <property type="term" value="F:ATP binding"/>
    <property type="evidence" value="ECO:0007669"/>
    <property type="project" value="UniProtKB-UniRule"/>
</dbReference>
<dbReference type="GO" id="GO:0045127">
    <property type="term" value="F:N-acetylglucosamine kinase activity"/>
    <property type="evidence" value="ECO:0007669"/>
    <property type="project" value="UniProtKB-UniRule"/>
</dbReference>
<dbReference type="GO" id="GO:0008270">
    <property type="term" value="F:zinc ion binding"/>
    <property type="evidence" value="ECO:0007669"/>
    <property type="project" value="UniProtKB-UniRule"/>
</dbReference>
<dbReference type="GO" id="GO:0006044">
    <property type="term" value="P:N-acetylglucosamine metabolic process"/>
    <property type="evidence" value="ECO:0007669"/>
    <property type="project" value="UniProtKB-UniRule"/>
</dbReference>
<dbReference type="GO" id="GO:0009254">
    <property type="term" value="P:peptidoglycan turnover"/>
    <property type="evidence" value="ECO:0007669"/>
    <property type="project" value="UniProtKB-UniRule"/>
</dbReference>
<dbReference type="CDD" id="cd24057">
    <property type="entry name" value="ASKHA_NBD_ROK_NAGK"/>
    <property type="match status" value="1"/>
</dbReference>
<dbReference type="FunFam" id="3.30.420.40:FF:000049">
    <property type="entry name" value="N-acetyl-D-glucosamine kinase"/>
    <property type="match status" value="1"/>
</dbReference>
<dbReference type="FunFam" id="3.30.420.40:FF:000051">
    <property type="entry name" value="N-acetyl-D-glucosamine kinase"/>
    <property type="match status" value="1"/>
</dbReference>
<dbReference type="Gene3D" id="3.30.420.40">
    <property type="match status" value="2"/>
</dbReference>
<dbReference type="HAMAP" id="MF_01271">
    <property type="entry name" value="GlcNAc_kinase"/>
    <property type="match status" value="1"/>
</dbReference>
<dbReference type="InterPro" id="IPR043129">
    <property type="entry name" value="ATPase_NBD"/>
</dbReference>
<dbReference type="InterPro" id="IPR023505">
    <property type="entry name" value="N-acetyl-D-glucosamine_kinase"/>
</dbReference>
<dbReference type="InterPro" id="IPR000600">
    <property type="entry name" value="ROK"/>
</dbReference>
<dbReference type="InterPro" id="IPR049874">
    <property type="entry name" value="ROK_cs"/>
</dbReference>
<dbReference type="NCBIfam" id="NF009835">
    <property type="entry name" value="PRK13310.1"/>
    <property type="match status" value="1"/>
</dbReference>
<dbReference type="PANTHER" id="PTHR18964:SF162">
    <property type="entry name" value="N-ACETYL-D-GLUCOSAMINE KINASE"/>
    <property type="match status" value="1"/>
</dbReference>
<dbReference type="PANTHER" id="PTHR18964">
    <property type="entry name" value="ROK (REPRESSOR, ORF, KINASE) FAMILY"/>
    <property type="match status" value="1"/>
</dbReference>
<dbReference type="Pfam" id="PF00480">
    <property type="entry name" value="ROK"/>
    <property type="match status" value="1"/>
</dbReference>
<dbReference type="SUPFAM" id="SSF53067">
    <property type="entry name" value="Actin-like ATPase domain"/>
    <property type="match status" value="1"/>
</dbReference>
<dbReference type="PROSITE" id="PS01125">
    <property type="entry name" value="ROK"/>
    <property type="match status" value="1"/>
</dbReference>
<keyword id="KW-0067">ATP-binding</keyword>
<keyword id="KW-0119">Carbohydrate metabolism</keyword>
<keyword id="KW-0418">Kinase</keyword>
<keyword id="KW-0479">Metal-binding</keyword>
<keyword id="KW-0547">Nucleotide-binding</keyword>
<keyword id="KW-1185">Reference proteome</keyword>
<keyword id="KW-0808">Transferase</keyword>
<keyword id="KW-0862">Zinc</keyword>
<sequence>MYYGFDIGGTKIALGVFDSGRQLQWEKRVPTPRDSYDAFLDAVCELVAEADRRFGCKGSVGIGIPGMPETEDGTLYAANVPAASGKPLRADLSARLDRDVRLDNDANCFALSEAWDDEFTQYPLVMGLILGTGVGGGLIFNGRPITGKSYITGEFGHMRLPVDALTMMGLDFPLRRCGCGQYGCIENYLSGRGFAWLYQHYYHQPLQAPEIIALYDQGDEQARAHVERYLDLLAVCLGNILTIVDPDLVVIGGGLSNFPAITTQLAERLPRHLLPVARVPRIERARHGDAGGMRGAAFLHLTD</sequence>
<protein>
    <recommendedName>
        <fullName evidence="1">N-acetyl-D-glucosamine kinase</fullName>
        <ecNumber evidence="1">2.7.1.59</ecNumber>
    </recommendedName>
    <alternativeName>
        <fullName evidence="1">GlcNAc kinase</fullName>
    </alternativeName>
</protein>
<gene>
    <name evidence="1" type="primary">nagK</name>
    <name type="ordered locus">c1394</name>
</gene>
<accession>Q8FIM5</accession>
<proteinExistence type="inferred from homology"/>
<organism>
    <name type="scientific">Escherichia coli O6:H1 (strain CFT073 / ATCC 700928 / UPEC)</name>
    <dbReference type="NCBI Taxonomy" id="199310"/>
    <lineage>
        <taxon>Bacteria</taxon>
        <taxon>Pseudomonadati</taxon>
        <taxon>Pseudomonadota</taxon>
        <taxon>Gammaproteobacteria</taxon>
        <taxon>Enterobacterales</taxon>
        <taxon>Enterobacteriaceae</taxon>
        <taxon>Escherichia</taxon>
    </lineage>
</organism>
<comment type="function">
    <text evidence="1">Catalyzes the phosphorylation of N-acetyl-D-glucosamine (GlcNAc) derived from cell-wall degradation, yielding GlcNAc-6-P.</text>
</comment>
<comment type="catalytic activity">
    <reaction evidence="1">
        <text>N-acetyl-D-glucosamine + ATP = N-acetyl-D-glucosamine 6-phosphate + ADP + H(+)</text>
        <dbReference type="Rhea" id="RHEA:17417"/>
        <dbReference type="ChEBI" id="CHEBI:15378"/>
        <dbReference type="ChEBI" id="CHEBI:30616"/>
        <dbReference type="ChEBI" id="CHEBI:57513"/>
        <dbReference type="ChEBI" id="CHEBI:456216"/>
        <dbReference type="ChEBI" id="CHEBI:506227"/>
        <dbReference type="EC" id="2.7.1.59"/>
    </reaction>
</comment>
<comment type="pathway">
    <text evidence="1">Cell wall biogenesis; peptidoglycan recycling.</text>
</comment>
<comment type="similarity">
    <text evidence="1">Belongs to the ROK (NagC/XylR) family. NagK subfamily.</text>
</comment>
<feature type="chain" id="PRO_0000270103" description="N-acetyl-D-glucosamine kinase">
    <location>
        <begin position="1"/>
        <end position="303"/>
    </location>
</feature>
<feature type="binding site" evidence="1">
    <location>
        <begin position="4"/>
        <end position="11"/>
    </location>
    <ligand>
        <name>ATP</name>
        <dbReference type="ChEBI" id="CHEBI:30616"/>
    </ligand>
</feature>
<feature type="binding site" evidence="1">
    <location>
        <begin position="133"/>
        <end position="140"/>
    </location>
    <ligand>
        <name>ATP</name>
        <dbReference type="ChEBI" id="CHEBI:30616"/>
    </ligand>
</feature>
<feature type="binding site" evidence="1">
    <location>
        <position position="157"/>
    </location>
    <ligand>
        <name>Zn(2+)</name>
        <dbReference type="ChEBI" id="CHEBI:29105"/>
    </ligand>
</feature>
<feature type="binding site" evidence="1">
    <location>
        <position position="177"/>
    </location>
    <ligand>
        <name>Zn(2+)</name>
        <dbReference type="ChEBI" id="CHEBI:29105"/>
    </ligand>
</feature>
<feature type="binding site" evidence="1">
    <location>
        <position position="179"/>
    </location>
    <ligand>
        <name>Zn(2+)</name>
        <dbReference type="ChEBI" id="CHEBI:29105"/>
    </ligand>
</feature>
<feature type="binding site" evidence="1">
    <location>
        <position position="184"/>
    </location>
    <ligand>
        <name>Zn(2+)</name>
        <dbReference type="ChEBI" id="CHEBI:29105"/>
    </ligand>
</feature>
<reference key="1">
    <citation type="journal article" date="2002" name="Proc. Natl. Acad. Sci. U.S.A.">
        <title>Extensive mosaic structure revealed by the complete genome sequence of uropathogenic Escherichia coli.</title>
        <authorList>
            <person name="Welch R.A."/>
            <person name="Burland V."/>
            <person name="Plunkett G. III"/>
            <person name="Redford P."/>
            <person name="Roesch P."/>
            <person name="Rasko D."/>
            <person name="Buckles E.L."/>
            <person name="Liou S.-R."/>
            <person name="Boutin A."/>
            <person name="Hackett J."/>
            <person name="Stroud D."/>
            <person name="Mayhew G.F."/>
            <person name="Rose D.J."/>
            <person name="Zhou S."/>
            <person name="Schwartz D.C."/>
            <person name="Perna N.T."/>
            <person name="Mobley H.L.T."/>
            <person name="Donnenberg M.S."/>
            <person name="Blattner F.R."/>
        </authorList>
    </citation>
    <scope>NUCLEOTIDE SEQUENCE [LARGE SCALE GENOMIC DNA]</scope>
    <source>
        <strain>CFT073 / ATCC 700928 / UPEC</strain>
    </source>
</reference>